<sequence length="102" mass="11049">MYAIIVTGGKQYKVEAGQAIYVEKLDAAAGDKVTFDQVVFVGGDTTKVGTPTVDGATVEGTVEKQGRDRKVVTFKYKAKKGQHTKKGHRQPYTKVTIDTINA</sequence>
<evidence type="ECO:0000255" key="1">
    <source>
        <dbReference type="HAMAP-Rule" id="MF_01363"/>
    </source>
</evidence>
<evidence type="ECO:0000305" key="2"/>
<proteinExistence type="inferred from homology"/>
<reference key="1">
    <citation type="journal article" date="2003" name="Proc. Natl. Acad. Sci. U.S.A.">
        <title>Complete genome sequence of Lactobacillus plantarum WCFS1.</title>
        <authorList>
            <person name="Kleerebezem M."/>
            <person name="Boekhorst J."/>
            <person name="van Kranenburg R."/>
            <person name="Molenaar D."/>
            <person name="Kuipers O.P."/>
            <person name="Leer R."/>
            <person name="Tarchini R."/>
            <person name="Peters S.A."/>
            <person name="Sandbrink H.M."/>
            <person name="Fiers M.W.E.J."/>
            <person name="Stiekema W."/>
            <person name="Klein Lankhorst R.M."/>
            <person name="Bron P.A."/>
            <person name="Hoffer S.M."/>
            <person name="Nierop Groot M.N."/>
            <person name="Kerkhoven R."/>
            <person name="De Vries M."/>
            <person name="Ursing B."/>
            <person name="De Vos W.M."/>
            <person name="Siezen R.J."/>
        </authorList>
    </citation>
    <scope>NUCLEOTIDE SEQUENCE [LARGE SCALE GENOMIC DNA]</scope>
    <source>
        <strain>ATCC BAA-793 / NCIMB 8826 / WCFS1</strain>
    </source>
</reference>
<reference key="2">
    <citation type="journal article" date="2012" name="J. Bacteriol.">
        <title>Complete resequencing and reannotation of the Lactobacillus plantarum WCFS1 genome.</title>
        <authorList>
            <person name="Siezen R.J."/>
            <person name="Francke C."/>
            <person name="Renckens B."/>
            <person name="Boekhorst J."/>
            <person name="Wels M."/>
            <person name="Kleerebezem M."/>
            <person name="van Hijum S.A."/>
        </authorList>
    </citation>
    <scope>NUCLEOTIDE SEQUENCE [LARGE SCALE GENOMIC DNA]</scope>
    <scope>GENOME REANNOTATION</scope>
    <source>
        <strain>ATCC BAA-793 / NCIMB 8826 / WCFS1</strain>
    </source>
</reference>
<feature type="chain" id="PRO_0000270678" description="Large ribosomal subunit protein bL21">
    <location>
        <begin position="1"/>
        <end position="102"/>
    </location>
</feature>
<organism>
    <name type="scientific">Lactiplantibacillus plantarum (strain ATCC BAA-793 / NCIMB 8826 / WCFS1)</name>
    <name type="common">Lactobacillus plantarum</name>
    <dbReference type="NCBI Taxonomy" id="220668"/>
    <lineage>
        <taxon>Bacteria</taxon>
        <taxon>Bacillati</taxon>
        <taxon>Bacillota</taxon>
        <taxon>Bacilli</taxon>
        <taxon>Lactobacillales</taxon>
        <taxon>Lactobacillaceae</taxon>
        <taxon>Lactiplantibacillus</taxon>
    </lineage>
</organism>
<name>RL21_LACPL</name>
<comment type="function">
    <text evidence="1">This protein binds to 23S rRNA in the presence of protein L20.</text>
</comment>
<comment type="subunit">
    <text evidence="1">Part of the 50S ribosomal subunit. Contacts protein L20.</text>
</comment>
<comment type="similarity">
    <text evidence="1">Belongs to the bacterial ribosomal protein bL21 family.</text>
</comment>
<protein>
    <recommendedName>
        <fullName evidence="1">Large ribosomal subunit protein bL21</fullName>
    </recommendedName>
    <alternativeName>
        <fullName evidence="2">50S ribosomal protein L21</fullName>
    </alternativeName>
</protein>
<dbReference type="EMBL" id="AL935263">
    <property type="protein sequence ID" value="CCC78906.1"/>
    <property type="molecule type" value="Genomic_DNA"/>
</dbReference>
<dbReference type="RefSeq" id="WP_003640343.1">
    <property type="nucleotide sequence ID" value="NC_004567.2"/>
</dbReference>
<dbReference type="RefSeq" id="YP_004889420.1">
    <property type="nucleotide sequence ID" value="NC_004567.2"/>
</dbReference>
<dbReference type="SMR" id="Q88WN5"/>
<dbReference type="STRING" id="220668.lp_1592"/>
<dbReference type="EnsemblBacteria" id="CCC78906">
    <property type="protein sequence ID" value="CCC78906"/>
    <property type="gene ID" value="lp_1592"/>
</dbReference>
<dbReference type="GeneID" id="89668975"/>
<dbReference type="KEGG" id="lpl:lp_1592"/>
<dbReference type="PATRIC" id="fig|220668.9.peg.1341"/>
<dbReference type="eggNOG" id="COG0261">
    <property type="taxonomic scope" value="Bacteria"/>
</dbReference>
<dbReference type="HOGENOM" id="CLU_061463_3_2_9"/>
<dbReference type="OrthoDB" id="9813334at2"/>
<dbReference type="PhylomeDB" id="Q88WN5"/>
<dbReference type="Proteomes" id="UP000000432">
    <property type="component" value="Chromosome"/>
</dbReference>
<dbReference type="GO" id="GO:0005737">
    <property type="term" value="C:cytoplasm"/>
    <property type="evidence" value="ECO:0007669"/>
    <property type="project" value="UniProtKB-ARBA"/>
</dbReference>
<dbReference type="GO" id="GO:1990904">
    <property type="term" value="C:ribonucleoprotein complex"/>
    <property type="evidence" value="ECO:0007669"/>
    <property type="project" value="UniProtKB-KW"/>
</dbReference>
<dbReference type="GO" id="GO:0005840">
    <property type="term" value="C:ribosome"/>
    <property type="evidence" value="ECO:0007669"/>
    <property type="project" value="UniProtKB-KW"/>
</dbReference>
<dbReference type="GO" id="GO:0019843">
    <property type="term" value="F:rRNA binding"/>
    <property type="evidence" value="ECO:0007669"/>
    <property type="project" value="UniProtKB-UniRule"/>
</dbReference>
<dbReference type="GO" id="GO:0003735">
    <property type="term" value="F:structural constituent of ribosome"/>
    <property type="evidence" value="ECO:0007669"/>
    <property type="project" value="InterPro"/>
</dbReference>
<dbReference type="GO" id="GO:0006412">
    <property type="term" value="P:translation"/>
    <property type="evidence" value="ECO:0007669"/>
    <property type="project" value="UniProtKB-UniRule"/>
</dbReference>
<dbReference type="HAMAP" id="MF_01363">
    <property type="entry name" value="Ribosomal_bL21"/>
    <property type="match status" value="1"/>
</dbReference>
<dbReference type="InterPro" id="IPR028909">
    <property type="entry name" value="bL21-like"/>
</dbReference>
<dbReference type="InterPro" id="IPR036164">
    <property type="entry name" value="bL21-like_sf"/>
</dbReference>
<dbReference type="InterPro" id="IPR001787">
    <property type="entry name" value="Ribosomal_bL21"/>
</dbReference>
<dbReference type="InterPro" id="IPR018258">
    <property type="entry name" value="Ribosomal_bL21_CS"/>
</dbReference>
<dbReference type="NCBIfam" id="TIGR00061">
    <property type="entry name" value="L21"/>
    <property type="match status" value="1"/>
</dbReference>
<dbReference type="PANTHER" id="PTHR21349">
    <property type="entry name" value="50S RIBOSOMAL PROTEIN L21"/>
    <property type="match status" value="1"/>
</dbReference>
<dbReference type="PANTHER" id="PTHR21349:SF0">
    <property type="entry name" value="LARGE RIBOSOMAL SUBUNIT PROTEIN BL21M"/>
    <property type="match status" value="1"/>
</dbReference>
<dbReference type="Pfam" id="PF00829">
    <property type="entry name" value="Ribosomal_L21p"/>
    <property type="match status" value="1"/>
</dbReference>
<dbReference type="SUPFAM" id="SSF141091">
    <property type="entry name" value="L21p-like"/>
    <property type="match status" value="1"/>
</dbReference>
<dbReference type="PROSITE" id="PS01169">
    <property type="entry name" value="RIBOSOMAL_L21"/>
    <property type="match status" value="1"/>
</dbReference>
<keyword id="KW-1185">Reference proteome</keyword>
<keyword id="KW-0687">Ribonucleoprotein</keyword>
<keyword id="KW-0689">Ribosomal protein</keyword>
<keyword id="KW-0694">RNA-binding</keyword>
<keyword id="KW-0699">rRNA-binding</keyword>
<gene>
    <name evidence="1" type="primary">rplU</name>
    <name type="ordered locus">lp_1592</name>
</gene>
<accession>Q88WN5</accession>
<accession>F9UNW7</accession>